<gene>
    <name evidence="3" type="primary">PINE1</name>
    <name evidence="5" type="ORF">sscle_10g074920</name>
</gene>
<comment type="function">
    <text evidence="2">Effector protein required for full virulence. Directly interacts with and functionally inactivates PG-inhibiting proteins (PGIPs). PGIPs are a defense mechanism of infected plants, that inhibit the plant pathogens secreted polygalacturonases (PGs) used to degrade the plant cell wall. Excerts its function by interacting with host PGIPs to negate their polygalacturonase-inhibiting function via enhanced dissociation of PGIPs from PGs.</text>
</comment>
<comment type="subunit">
    <text evidence="2">Interacts with Arabidopsis thaliana PGIP1.</text>
</comment>
<comment type="subcellular location">
    <subcellularLocation>
        <location evidence="2">Secreted</location>
    </subcellularLocation>
</comment>
<dbReference type="EMBL" id="CP017823">
    <property type="protein sequence ID" value="APA12722.1"/>
    <property type="molecule type" value="Genomic_DNA"/>
</dbReference>
<dbReference type="VEuPathDB" id="FungiDB:sscle_10g074920"/>
<dbReference type="OrthoDB" id="3491180at2759"/>
<dbReference type="PHI-base" id="PHI:123116"/>
<dbReference type="Proteomes" id="UP000177798">
    <property type="component" value="Chromosome 10"/>
</dbReference>
<dbReference type="GO" id="GO:0005576">
    <property type="term" value="C:extracellular region"/>
    <property type="evidence" value="ECO:0007669"/>
    <property type="project" value="UniProtKB-SubCell"/>
</dbReference>
<proteinExistence type="evidence at protein level"/>
<sequence length="105" mass="10653">MKLSQPLSIFAILAASTVAVAVPQDDACAQCLTEGTFCEGFAGPVGTCCDGLVCENAPGVADDAHCIRKKKCLAKGETCVSIAGPVGTCCTGKCTFVAPDYSVCK</sequence>
<organism>
    <name type="scientific">Sclerotinia sclerotiorum (strain ATCC 18683 / 1980 / Ss-1)</name>
    <name type="common">White mold</name>
    <name type="synonym">Whetzelinia sclerotiorum</name>
    <dbReference type="NCBI Taxonomy" id="665079"/>
    <lineage>
        <taxon>Eukaryota</taxon>
        <taxon>Fungi</taxon>
        <taxon>Dikarya</taxon>
        <taxon>Ascomycota</taxon>
        <taxon>Pezizomycotina</taxon>
        <taxon>Leotiomycetes</taxon>
        <taxon>Helotiales</taxon>
        <taxon>Sclerotiniaceae</taxon>
        <taxon>Sclerotinia</taxon>
    </lineage>
</organism>
<accession>A0A1D9QD76</accession>
<keyword id="KW-0964">Secreted</keyword>
<keyword id="KW-0732">Signal</keyword>
<evidence type="ECO:0000255" key="1"/>
<evidence type="ECO:0000269" key="2">
    <source>
    </source>
</evidence>
<evidence type="ECO:0000303" key="3">
    <source>
    </source>
</evidence>
<evidence type="ECO:0000305" key="4"/>
<evidence type="ECO:0000312" key="5">
    <source>
        <dbReference type="EMBL" id="APA12722.1"/>
    </source>
</evidence>
<feature type="signal peptide" evidence="1">
    <location>
        <begin position="1"/>
        <end position="21"/>
    </location>
</feature>
<feature type="chain" id="PRO_5009445027" description="Secreted effector protein PINE1" evidence="1">
    <location>
        <begin position="22"/>
        <end position="105"/>
    </location>
</feature>
<name>PINE1_SCLS1</name>
<protein>
    <recommendedName>
        <fullName evidence="4">Secreted effector protein PINE1</fullName>
    </recommendedName>
    <alternativeName>
        <fullName evidence="3">PGIP-inactivating effector protein 1</fullName>
    </alternativeName>
</protein>
<reference key="1">
    <citation type="journal article" date="2017" name="Genome Biol. Evol.">
        <title>The complete genome sequence of the phytopathogenic fungus Sclerotinia sclerotiorum reveals insights into the genome architecture of broad host range pathogens.</title>
        <authorList>
            <person name="Derbyshire M."/>
            <person name="Denton-Giles M."/>
            <person name="Hegedus D."/>
            <person name="Seifbarghy S."/>
            <person name="Rollins J."/>
            <person name="van Kan J."/>
            <person name="Seidl M.F."/>
            <person name="Faino L."/>
            <person name="Mbengue M."/>
            <person name="Navaud O."/>
            <person name="Raffaele S."/>
            <person name="Hammond-Kosack K."/>
            <person name="Heard S."/>
            <person name="Oliver R."/>
        </authorList>
    </citation>
    <scope>NUCLEOTIDE SEQUENCE [LARGE SCALE GENOMIC DNA]</scope>
    <source>
        <strain>ATCC 18683 / 1980 / Ss-1</strain>
    </source>
</reference>
<reference key="2">
    <citation type="journal article" date="2022" name="Nat. Commun.">
        <title>A fungal extracellular effector inactivates plant polygalacturonase-inhibiting protein.</title>
        <authorList>
            <person name="Wei W."/>
            <person name="Xu L."/>
            <person name="Peng H."/>
            <person name="Zhu W."/>
            <person name="Tanaka K."/>
            <person name="Cheng J."/>
            <person name="Sanguinet K.A."/>
            <person name="Vandemark G."/>
            <person name="Chen W."/>
        </authorList>
    </citation>
    <scope>FUNCTION</scope>
    <scope>SUBUNIT</scope>
</reference>